<comment type="function">
    <text evidence="1">Required for disulfide bond formation in some periplasmic proteins. Acts by oxidizing the DsbA protein.</text>
</comment>
<comment type="subcellular location">
    <subcellularLocation>
        <location evidence="1">Cell inner membrane</location>
        <topology evidence="1">Multi-pass membrane protein</topology>
    </subcellularLocation>
</comment>
<comment type="similarity">
    <text evidence="1">Belongs to the DsbB family.</text>
</comment>
<protein>
    <recommendedName>
        <fullName evidence="1">Disulfide bond formation protein B</fullName>
    </recommendedName>
    <alternativeName>
        <fullName evidence="1">Disulfide oxidoreductase</fullName>
    </alternativeName>
</protein>
<gene>
    <name evidence="1" type="primary">dsbB</name>
    <name type="ordered locus">Csal_2653</name>
</gene>
<accession>Q1QU58</accession>
<evidence type="ECO:0000255" key="1">
    <source>
        <dbReference type="HAMAP-Rule" id="MF_00286"/>
    </source>
</evidence>
<keyword id="KW-0997">Cell inner membrane</keyword>
<keyword id="KW-1003">Cell membrane</keyword>
<keyword id="KW-0143">Chaperone</keyword>
<keyword id="KW-1015">Disulfide bond</keyword>
<keyword id="KW-0249">Electron transport</keyword>
<keyword id="KW-0472">Membrane</keyword>
<keyword id="KW-0560">Oxidoreductase</keyword>
<keyword id="KW-0676">Redox-active center</keyword>
<keyword id="KW-1185">Reference proteome</keyword>
<keyword id="KW-0812">Transmembrane</keyword>
<keyword id="KW-1133">Transmembrane helix</keyword>
<keyword id="KW-0813">Transport</keyword>
<feature type="chain" id="PRO_0000298353" description="Disulfide bond formation protein B">
    <location>
        <begin position="1"/>
        <end position="172"/>
    </location>
</feature>
<feature type="topological domain" description="Cytoplasmic" evidence="1">
    <location>
        <begin position="1"/>
        <end position="13"/>
    </location>
</feature>
<feature type="transmembrane region" description="Helical" evidence="1">
    <location>
        <begin position="14"/>
        <end position="30"/>
    </location>
</feature>
<feature type="topological domain" description="Periplasmic" evidence="1">
    <location>
        <begin position="31"/>
        <end position="48"/>
    </location>
</feature>
<feature type="transmembrane region" description="Helical" evidence="1">
    <location>
        <begin position="49"/>
        <end position="65"/>
    </location>
</feature>
<feature type="topological domain" description="Cytoplasmic" evidence="1">
    <location>
        <begin position="66"/>
        <end position="72"/>
    </location>
</feature>
<feature type="transmembrane region" description="Helical" evidence="1">
    <location>
        <begin position="73"/>
        <end position="90"/>
    </location>
</feature>
<feature type="topological domain" description="Periplasmic" evidence="1">
    <location>
        <begin position="91"/>
        <end position="147"/>
    </location>
</feature>
<feature type="transmembrane region" description="Helical" evidence="1">
    <location>
        <begin position="148"/>
        <end position="166"/>
    </location>
</feature>
<feature type="topological domain" description="Cytoplasmic" evidence="1">
    <location>
        <begin position="167"/>
        <end position="172"/>
    </location>
</feature>
<feature type="disulfide bond" description="Redox-active" evidence="1">
    <location>
        <begin position="40"/>
        <end position="43"/>
    </location>
</feature>
<feature type="disulfide bond" description="Redox-active" evidence="1">
    <location>
        <begin position="106"/>
        <end position="133"/>
    </location>
</feature>
<sequence length="172" mass="18086">MIIRLAGMSVRQGCLLGLLMCALMMGVALVLQYVYGLTPCPLCIGQRIAVLLAAFVFAIGALHNPAGNLGRGLYAGLAALASVLGLAVAARHVWLQSLPPENVPSCGPGLDYMMEVLPLWDVLSRVLAGSGECAEIHGSLLGMSIPQWTLLGFAVLLLIPLGMLAGIVIRRR</sequence>
<reference key="1">
    <citation type="journal article" date="2011" name="Stand. Genomic Sci.">
        <title>Complete genome sequence of the halophilic and highly halotolerant Chromohalobacter salexigens type strain (1H11(T)).</title>
        <authorList>
            <person name="Copeland A."/>
            <person name="O'Connor K."/>
            <person name="Lucas S."/>
            <person name="Lapidus A."/>
            <person name="Berry K.W."/>
            <person name="Detter J.C."/>
            <person name="Del Rio T.G."/>
            <person name="Hammon N."/>
            <person name="Dalin E."/>
            <person name="Tice H."/>
            <person name="Pitluck S."/>
            <person name="Bruce D."/>
            <person name="Goodwin L."/>
            <person name="Han C."/>
            <person name="Tapia R."/>
            <person name="Saunders E."/>
            <person name="Schmutz J."/>
            <person name="Brettin T."/>
            <person name="Larimer F."/>
            <person name="Land M."/>
            <person name="Hauser L."/>
            <person name="Vargas C."/>
            <person name="Nieto J.J."/>
            <person name="Kyrpides N.C."/>
            <person name="Ivanova N."/>
            <person name="Goker M."/>
            <person name="Klenk H.P."/>
            <person name="Csonka L.N."/>
            <person name="Woyke T."/>
        </authorList>
    </citation>
    <scope>NUCLEOTIDE SEQUENCE [LARGE SCALE GENOMIC DNA]</scope>
    <source>
        <strain>ATCC BAA-138 / DSM 3043 / CIP 106854 / NCIMB 13768 / 1H11</strain>
    </source>
</reference>
<proteinExistence type="inferred from homology"/>
<name>DSBB_CHRSD</name>
<organism>
    <name type="scientific">Chromohalobacter salexigens (strain ATCC BAA-138 / DSM 3043 / CIP 106854 / NCIMB 13768 / 1H11)</name>
    <dbReference type="NCBI Taxonomy" id="290398"/>
    <lineage>
        <taxon>Bacteria</taxon>
        <taxon>Pseudomonadati</taxon>
        <taxon>Pseudomonadota</taxon>
        <taxon>Gammaproteobacteria</taxon>
        <taxon>Oceanospirillales</taxon>
        <taxon>Halomonadaceae</taxon>
        <taxon>Chromohalobacter</taxon>
    </lineage>
</organism>
<dbReference type="EMBL" id="CP000285">
    <property type="protein sequence ID" value="ABE60000.1"/>
    <property type="molecule type" value="Genomic_DNA"/>
</dbReference>
<dbReference type="RefSeq" id="WP_011507946.1">
    <property type="nucleotide sequence ID" value="NC_007963.1"/>
</dbReference>
<dbReference type="SMR" id="Q1QU58"/>
<dbReference type="STRING" id="290398.Csal_2653"/>
<dbReference type="GeneID" id="95335351"/>
<dbReference type="KEGG" id="csa:Csal_2653"/>
<dbReference type="eggNOG" id="COG1495">
    <property type="taxonomic scope" value="Bacteria"/>
</dbReference>
<dbReference type="HOGENOM" id="CLU_098660_1_1_6"/>
<dbReference type="OrthoDB" id="3711263at2"/>
<dbReference type="Proteomes" id="UP000000239">
    <property type="component" value="Chromosome"/>
</dbReference>
<dbReference type="GO" id="GO:0005886">
    <property type="term" value="C:plasma membrane"/>
    <property type="evidence" value="ECO:0007669"/>
    <property type="project" value="UniProtKB-SubCell"/>
</dbReference>
<dbReference type="GO" id="GO:0009055">
    <property type="term" value="F:electron transfer activity"/>
    <property type="evidence" value="ECO:0007669"/>
    <property type="project" value="UniProtKB-UniRule"/>
</dbReference>
<dbReference type="GO" id="GO:0015035">
    <property type="term" value="F:protein-disulfide reductase activity"/>
    <property type="evidence" value="ECO:0007669"/>
    <property type="project" value="UniProtKB-UniRule"/>
</dbReference>
<dbReference type="GO" id="GO:0006457">
    <property type="term" value="P:protein folding"/>
    <property type="evidence" value="ECO:0007669"/>
    <property type="project" value="InterPro"/>
</dbReference>
<dbReference type="Gene3D" id="1.20.1550.10">
    <property type="entry name" value="DsbB-like"/>
    <property type="match status" value="1"/>
</dbReference>
<dbReference type="HAMAP" id="MF_00286">
    <property type="entry name" value="DsbB"/>
    <property type="match status" value="1"/>
</dbReference>
<dbReference type="InterPro" id="IPR003752">
    <property type="entry name" value="DiS_bond_form_DsbB/BdbC"/>
</dbReference>
<dbReference type="InterPro" id="IPR022920">
    <property type="entry name" value="Disulphide_bond_form_DsbB"/>
</dbReference>
<dbReference type="InterPro" id="IPR050183">
    <property type="entry name" value="DsbB"/>
</dbReference>
<dbReference type="InterPro" id="IPR023380">
    <property type="entry name" value="DsbB-like_sf"/>
</dbReference>
<dbReference type="PANTHER" id="PTHR36570">
    <property type="entry name" value="DISULFIDE BOND FORMATION PROTEIN B"/>
    <property type="match status" value="1"/>
</dbReference>
<dbReference type="PANTHER" id="PTHR36570:SF3">
    <property type="entry name" value="DISULFIDE BOND FORMATION PROTEIN B"/>
    <property type="match status" value="1"/>
</dbReference>
<dbReference type="Pfam" id="PF02600">
    <property type="entry name" value="DsbB"/>
    <property type="match status" value="1"/>
</dbReference>
<dbReference type="SUPFAM" id="SSF158442">
    <property type="entry name" value="DsbB-like"/>
    <property type="match status" value="1"/>
</dbReference>